<dbReference type="EC" id="7.1.2.2" evidence="1"/>
<dbReference type="EMBL" id="CP001251">
    <property type="protein sequence ID" value="ACK41462.1"/>
    <property type="molecule type" value="Genomic_DNA"/>
</dbReference>
<dbReference type="RefSeq" id="WP_012582547.1">
    <property type="nucleotide sequence ID" value="NC_011661.1"/>
</dbReference>
<dbReference type="RefSeq" id="YP_002352076.1">
    <property type="nucleotide sequence ID" value="NC_011661.1"/>
</dbReference>
<dbReference type="SMR" id="B8DYT0"/>
<dbReference type="FunCoup" id="B8DYT0">
    <property type="interactions" value="266"/>
</dbReference>
<dbReference type="STRING" id="515635.Dtur_0130"/>
<dbReference type="EnsemblBacteria" id="ACK41462">
    <property type="protein sequence ID" value="ACK41462"/>
    <property type="gene ID" value="Dtur_0130"/>
</dbReference>
<dbReference type="KEGG" id="dtu:Dtur_0130"/>
<dbReference type="PATRIC" id="fig|515635.4.peg.135"/>
<dbReference type="eggNOG" id="COG0055">
    <property type="taxonomic scope" value="Bacteria"/>
</dbReference>
<dbReference type="HOGENOM" id="CLU_022398_0_2_0"/>
<dbReference type="InParanoid" id="B8DYT0"/>
<dbReference type="OrthoDB" id="9801639at2"/>
<dbReference type="Proteomes" id="UP000007719">
    <property type="component" value="Chromosome"/>
</dbReference>
<dbReference type="GO" id="GO:0005886">
    <property type="term" value="C:plasma membrane"/>
    <property type="evidence" value="ECO:0007669"/>
    <property type="project" value="UniProtKB-SubCell"/>
</dbReference>
<dbReference type="GO" id="GO:0045259">
    <property type="term" value="C:proton-transporting ATP synthase complex"/>
    <property type="evidence" value="ECO:0007669"/>
    <property type="project" value="UniProtKB-KW"/>
</dbReference>
<dbReference type="GO" id="GO:0005524">
    <property type="term" value="F:ATP binding"/>
    <property type="evidence" value="ECO:0007669"/>
    <property type="project" value="UniProtKB-UniRule"/>
</dbReference>
<dbReference type="GO" id="GO:0016887">
    <property type="term" value="F:ATP hydrolysis activity"/>
    <property type="evidence" value="ECO:0007669"/>
    <property type="project" value="InterPro"/>
</dbReference>
<dbReference type="GO" id="GO:0046933">
    <property type="term" value="F:proton-transporting ATP synthase activity, rotational mechanism"/>
    <property type="evidence" value="ECO:0007669"/>
    <property type="project" value="UniProtKB-UniRule"/>
</dbReference>
<dbReference type="CDD" id="cd18110">
    <property type="entry name" value="ATP-synt_F1_beta_C"/>
    <property type="match status" value="1"/>
</dbReference>
<dbReference type="CDD" id="cd18115">
    <property type="entry name" value="ATP-synt_F1_beta_N"/>
    <property type="match status" value="1"/>
</dbReference>
<dbReference type="CDD" id="cd01133">
    <property type="entry name" value="F1-ATPase_beta_CD"/>
    <property type="match status" value="1"/>
</dbReference>
<dbReference type="FunFam" id="1.10.1140.10:FF:000005">
    <property type="entry name" value="ATP synthase subunit beta"/>
    <property type="match status" value="1"/>
</dbReference>
<dbReference type="FunFam" id="3.40.50.300:FF:001630">
    <property type="entry name" value="ATP synthase subunit beta"/>
    <property type="match status" value="1"/>
</dbReference>
<dbReference type="Gene3D" id="2.40.10.170">
    <property type="match status" value="1"/>
</dbReference>
<dbReference type="Gene3D" id="1.10.1140.10">
    <property type="entry name" value="Bovine Mitochondrial F1-atpase, Atp Synthase Beta Chain, Chain D, domain 3"/>
    <property type="match status" value="1"/>
</dbReference>
<dbReference type="Gene3D" id="3.40.50.300">
    <property type="entry name" value="P-loop containing nucleotide triphosphate hydrolases"/>
    <property type="match status" value="1"/>
</dbReference>
<dbReference type="HAMAP" id="MF_01347">
    <property type="entry name" value="ATP_synth_beta_bact"/>
    <property type="match status" value="1"/>
</dbReference>
<dbReference type="InterPro" id="IPR003593">
    <property type="entry name" value="AAA+_ATPase"/>
</dbReference>
<dbReference type="InterPro" id="IPR055190">
    <property type="entry name" value="ATP-synt_VA_C"/>
</dbReference>
<dbReference type="InterPro" id="IPR005722">
    <property type="entry name" value="ATP_synth_F1_bsu"/>
</dbReference>
<dbReference type="InterPro" id="IPR020003">
    <property type="entry name" value="ATPase_a/bsu_AS"/>
</dbReference>
<dbReference type="InterPro" id="IPR050053">
    <property type="entry name" value="ATPase_alpha/beta_chains"/>
</dbReference>
<dbReference type="InterPro" id="IPR004100">
    <property type="entry name" value="ATPase_F1/V1/A1_a/bsu_N"/>
</dbReference>
<dbReference type="InterPro" id="IPR036121">
    <property type="entry name" value="ATPase_F1/V1/A1_a/bsu_N_sf"/>
</dbReference>
<dbReference type="InterPro" id="IPR000194">
    <property type="entry name" value="ATPase_F1/V1/A1_a/bsu_nucl-bd"/>
</dbReference>
<dbReference type="InterPro" id="IPR024034">
    <property type="entry name" value="ATPase_F1/V1_b/a_C"/>
</dbReference>
<dbReference type="InterPro" id="IPR027417">
    <property type="entry name" value="P-loop_NTPase"/>
</dbReference>
<dbReference type="NCBIfam" id="TIGR01039">
    <property type="entry name" value="atpD"/>
    <property type="match status" value="1"/>
</dbReference>
<dbReference type="PANTHER" id="PTHR15184">
    <property type="entry name" value="ATP SYNTHASE"/>
    <property type="match status" value="1"/>
</dbReference>
<dbReference type="PANTHER" id="PTHR15184:SF71">
    <property type="entry name" value="ATP SYNTHASE SUBUNIT BETA, MITOCHONDRIAL"/>
    <property type="match status" value="1"/>
</dbReference>
<dbReference type="Pfam" id="PF00006">
    <property type="entry name" value="ATP-synt_ab"/>
    <property type="match status" value="1"/>
</dbReference>
<dbReference type="Pfam" id="PF02874">
    <property type="entry name" value="ATP-synt_ab_N"/>
    <property type="match status" value="1"/>
</dbReference>
<dbReference type="Pfam" id="PF22919">
    <property type="entry name" value="ATP-synt_VA_C"/>
    <property type="match status" value="1"/>
</dbReference>
<dbReference type="SMART" id="SM00382">
    <property type="entry name" value="AAA"/>
    <property type="match status" value="1"/>
</dbReference>
<dbReference type="SUPFAM" id="SSF47917">
    <property type="entry name" value="C-terminal domain of alpha and beta subunits of F1 ATP synthase"/>
    <property type="match status" value="1"/>
</dbReference>
<dbReference type="SUPFAM" id="SSF50615">
    <property type="entry name" value="N-terminal domain of alpha and beta subunits of F1 ATP synthase"/>
    <property type="match status" value="1"/>
</dbReference>
<dbReference type="SUPFAM" id="SSF52540">
    <property type="entry name" value="P-loop containing nucleoside triphosphate hydrolases"/>
    <property type="match status" value="1"/>
</dbReference>
<dbReference type="PROSITE" id="PS00152">
    <property type="entry name" value="ATPASE_ALPHA_BETA"/>
    <property type="match status" value="1"/>
</dbReference>
<keyword id="KW-0066">ATP synthesis</keyword>
<keyword id="KW-0067">ATP-binding</keyword>
<keyword id="KW-0997">Cell inner membrane</keyword>
<keyword id="KW-1003">Cell membrane</keyword>
<keyword id="KW-0139">CF(1)</keyword>
<keyword id="KW-0375">Hydrogen ion transport</keyword>
<keyword id="KW-0406">Ion transport</keyword>
<keyword id="KW-0472">Membrane</keyword>
<keyword id="KW-0547">Nucleotide-binding</keyword>
<keyword id="KW-1185">Reference proteome</keyword>
<keyword id="KW-1278">Translocase</keyword>
<keyword id="KW-0813">Transport</keyword>
<protein>
    <recommendedName>
        <fullName evidence="1">ATP synthase subunit beta</fullName>
        <ecNumber evidence="1">7.1.2.2</ecNumber>
    </recommendedName>
    <alternativeName>
        <fullName evidence="1">ATP synthase F1 sector subunit beta</fullName>
    </alternativeName>
    <alternativeName>
        <fullName evidence="1">F-ATPase subunit beta</fullName>
    </alternativeName>
</protein>
<comment type="function">
    <text evidence="1">Produces ATP from ADP in the presence of a proton gradient across the membrane. The catalytic sites are hosted primarily by the beta subunits.</text>
</comment>
<comment type="catalytic activity">
    <reaction evidence="1">
        <text>ATP + H2O + 4 H(+)(in) = ADP + phosphate + 5 H(+)(out)</text>
        <dbReference type="Rhea" id="RHEA:57720"/>
        <dbReference type="ChEBI" id="CHEBI:15377"/>
        <dbReference type="ChEBI" id="CHEBI:15378"/>
        <dbReference type="ChEBI" id="CHEBI:30616"/>
        <dbReference type="ChEBI" id="CHEBI:43474"/>
        <dbReference type="ChEBI" id="CHEBI:456216"/>
        <dbReference type="EC" id="7.1.2.2"/>
    </reaction>
</comment>
<comment type="subunit">
    <text evidence="1">F-type ATPases have 2 components, CF(1) - the catalytic core - and CF(0) - the membrane proton channel. CF(1) has five subunits: alpha(3), beta(3), gamma(1), delta(1), epsilon(1). CF(0) has three main subunits: a(1), b(2) and c(9-12). The alpha and beta chains form an alternating ring which encloses part of the gamma chain. CF(1) is attached to CF(0) by a central stalk formed by the gamma and epsilon chains, while a peripheral stalk is formed by the delta and b chains.</text>
</comment>
<comment type="subcellular location">
    <subcellularLocation>
        <location evidence="1">Cell inner membrane</location>
        <topology evidence="1">Peripheral membrane protein</topology>
    </subcellularLocation>
</comment>
<comment type="similarity">
    <text evidence="1">Belongs to the ATPase alpha/beta chains family.</text>
</comment>
<proteinExistence type="inferred from homology"/>
<name>ATPB_DICTD</name>
<sequence>MEGEIIAVNGPVIDIYFPDDVPNVYEALELENPVKNEKLVLETRILLGDHRVRAIALGSTDGISRGLKVKRTFHPISVPVSEEVLGRVVNVFGEPIDGGDKIKGEMTPIIKNAVEFRRVEPSYSILETGIKAIDLLTPFPQGGKIGLFGGAGVGKTVLIMELIHNVAVAHGGISVFAGIGERSREGNELWLEMKESGVLSKAVLVFGQMNEPPGVRMRVPLTALTIAEYFRDYLGKDVLLLMDNIFRYVQAGMEVSSMLGRIPSAVGYQPTLITELGEVEERILSTDTGSITAVQAVYVPADDLTDPAPATIFSHLDSTLVLSRSIAEMGIYPAVDPLASSSQILEPKFVGYEHAEVARKVVEILQHYESLKDIISILGVEELSEEDRVIVNRARKIQLFLSQPLFVAAAYTNIPGVYVPREKTIEGFKAIIEGEVDDLPEDAFYMVGTLEDVKKKAQEHGALMY</sequence>
<accession>B8DYT0</accession>
<organism>
    <name type="scientific">Dictyoglomus turgidum (strain DSM 6724 / Z-1310)</name>
    <dbReference type="NCBI Taxonomy" id="515635"/>
    <lineage>
        <taxon>Bacteria</taxon>
        <taxon>Pseudomonadati</taxon>
        <taxon>Dictyoglomota</taxon>
        <taxon>Dictyoglomia</taxon>
        <taxon>Dictyoglomales</taxon>
        <taxon>Dictyoglomaceae</taxon>
        <taxon>Dictyoglomus</taxon>
    </lineage>
</organism>
<feature type="chain" id="PRO_1000143498" description="ATP synthase subunit beta">
    <location>
        <begin position="1"/>
        <end position="465"/>
    </location>
</feature>
<feature type="binding site" evidence="1">
    <location>
        <begin position="149"/>
        <end position="156"/>
    </location>
    <ligand>
        <name>ATP</name>
        <dbReference type="ChEBI" id="CHEBI:30616"/>
    </ligand>
</feature>
<evidence type="ECO:0000255" key="1">
    <source>
        <dbReference type="HAMAP-Rule" id="MF_01347"/>
    </source>
</evidence>
<reference key="1">
    <citation type="journal article" date="2016" name="Front. Microbiol.">
        <title>The complete genome sequence of hyperthermophile Dictyoglomus turgidum DSM 6724 reveals a specialized carbohydrate fermentor.</title>
        <authorList>
            <person name="Brumm P.J."/>
            <person name="Gowda K."/>
            <person name="Robb F.T."/>
            <person name="Mead D.A."/>
        </authorList>
    </citation>
    <scope>NUCLEOTIDE SEQUENCE [LARGE SCALE GENOMIC DNA]</scope>
    <source>
        <strain>DSM 6724 / Z-1310</strain>
    </source>
</reference>
<gene>
    <name evidence="1" type="primary">atpD</name>
    <name type="ordered locus">Dtur_0130</name>
</gene>